<dbReference type="EC" id="1.8.1.2" evidence="1"/>
<dbReference type="EMBL" id="CP000020">
    <property type="protein sequence ID" value="AAW84806.1"/>
    <property type="molecule type" value="Genomic_DNA"/>
</dbReference>
<dbReference type="RefSeq" id="WP_011261117.1">
    <property type="nucleotide sequence ID" value="NC_006840.2"/>
</dbReference>
<dbReference type="RefSeq" id="YP_203694.1">
    <property type="nucleotide sequence ID" value="NC_006840.2"/>
</dbReference>
<dbReference type="SMR" id="Q5E840"/>
<dbReference type="STRING" id="312309.VF_0311"/>
<dbReference type="EnsemblBacteria" id="AAW84806">
    <property type="protein sequence ID" value="AAW84806"/>
    <property type="gene ID" value="VF_0311"/>
</dbReference>
<dbReference type="GeneID" id="54162930"/>
<dbReference type="KEGG" id="vfi:VF_0311"/>
<dbReference type="PATRIC" id="fig|312309.11.peg.304"/>
<dbReference type="eggNOG" id="COG0155">
    <property type="taxonomic scope" value="Bacteria"/>
</dbReference>
<dbReference type="HOGENOM" id="CLU_001975_3_2_6"/>
<dbReference type="OrthoDB" id="3189055at2"/>
<dbReference type="UniPathway" id="UPA00140">
    <property type="reaction ID" value="UER00207"/>
</dbReference>
<dbReference type="Proteomes" id="UP000000537">
    <property type="component" value="Chromosome I"/>
</dbReference>
<dbReference type="GO" id="GO:0009337">
    <property type="term" value="C:sulfite reductase complex (NADPH)"/>
    <property type="evidence" value="ECO:0007669"/>
    <property type="project" value="InterPro"/>
</dbReference>
<dbReference type="GO" id="GO:0051539">
    <property type="term" value="F:4 iron, 4 sulfur cluster binding"/>
    <property type="evidence" value="ECO:0007669"/>
    <property type="project" value="UniProtKB-KW"/>
</dbReference>
<dbReference type="GO" id="GO:0020037">
    <property type="term" value="F:heme binding"/>
    <property type="evidence" value="ECO:0007669"/>
    <property type="project" value="InterPro"/>
</dbReference>
<dbReference type="GO" id="GO:0046872">
    <property type="term" value="F:metal ion binding"/>
    <property type="evidence" value="ECO:0007669"/>
    <property type="project" value="UniProtKB-KW"/>
</dbReference>
<dbReference type="GO" id="GO:0050661">
    <property type="term" value="F:NADP binding"/>
    <property type="evidence" value="ECO:0007669"/>
    <property type="project" value="InterPro"/>
</dbReference>
<dbReference type="GO" id="GO:0050311">
    <property type="term" value="F:sulfite reductase (ferredoxin) activity"/>
    <property type="evidence" value="ECO:0007669"/>
    <property type="project" value="TreeGrafter"/>
</dbReference>
<dbReference type="GO" id="GO:0004783">
    <property type="term" value="F:sulfite reductase (NADPH) activity"/>
    <property type="evidence" value="ECO:0007669"/>
    <property type="project" value="UniProtKB-UniRule"/>
</dbReference>
<dbReference type="GO" id="GO:0019344">
    <property type="term" value="P:cysteine biosynthetic process"/>
    <property type="evidence" value="ECO:0007669"/>
    <property type="project" value="UniProtKB-KW"/>
</dbReference>
<dbReference type="GO" id="GO:0070814">
    <property type="term" value="P:hydrogen sulfide biosynthetic process"/>
    <property type="evidence" value="ECO:0007669"/>
    <property type="project" value="UniProtKB-UniRule"/>
</dbReference>
<dbReference type="GO" id="GO:0000103">
    <property type="term" value="P:sulfate assimilation"/>
    <property type="evidence" value="ECO:0007669"/>
    <property type="project" value="UniProtKB-UniRule"/>
</dbReference>
<dbReference type="FunFam" id="3.30.413.10:FF:000003">
    <property type="entry name" value="Sulfite reductase [NADPH] hemoprotein beta-component"/>
    <property type="match status" value="1"/>
</dbReference>
<dbReference type="FunFam" id="3.30.413.10:FF:000004">
    <property type="entry name" value="Sulfite reductase [NADPH] hemoprotein beta-component"/>
    <property type="match status" value="1"/>
</dbReference>
<dbReference type="Gene3D" id="3.30.413.10">
    <property type="entry name" value="Sulfite Reductase Hemoprotein, domain 1"/>
    <property type="match status" value="2"/>
</dbReference>
<dbReference type="HAMAP" id="MF_01540">
    <property type="entry name" value="CysI"/>
    <property type="match status" value="1"/>
</dbReference>
<dbReference type="InterPro" id="IPR011786">
    <property type="entry name" value="CysI"/>
</dbReference>
<dbReference type="InterPro" id="IPR005117">
    <property type="entry name" value="NiRdtase/SiRdtase_haem-b_fer"/>
</dbReference>
<dbReference type="InterPro" id="IPR036136">
    <property type="entry name" value="Nit/Sulf_reduc_fer-like_dom_sf"/>
</dbReference>
<dbReference type="InterPro" id="IPR006067">
    <property type="entry name" value="NO2/SO3_Rdtase_4Fe4S_dom"/>
</dbReference>
<dbReference type="InterPro" id="IPR045169">
    <property type="entry name" value="NO2/SO3_Rdtase_4Fe4S_prot"/>
</dbReference>
<dbReference type="InterPro" id="IPR045854">
    <property type="entry name" value="NO2/SO3_Rdtase_4Fe4S_sf"/>
</dbReference>
<dbReference type="InterPro" id="IPR006066">
    <property type="entry name" value="NO2/SO3_Rdtase_FeS/sirohaem_BS"/>
</dbReference>
<dbReference type="NCBIfam" id="TIGR02041">
    <property type="entry name" value="CysI"/>
    <property type="match status" value="1"/>
</dbReference>
<dbReference type="NCBIfam" id="NF010029">
    <property type="entry name" value="PRK13504.1"/>
    <property type="match status" value="1"/>
</dbReference>
<dbReference type="PANTHER" id="PTHR11493:SF47">
    <property type="entry name" value="SULFITE REDUCTASE [NADPH] SUBUNIT BETA"/>
    <property type="match status" value="1"/>
</dbReference>
<dbReference type="PANTHER" id="PTHR11493">
    <property type="entry name" value="SULFITE REDUCTASE [NADPH] SUBUNIT BETA-RELATED"/>
    <property type="match status" value="1"/>
</dbReference>
<dbReference type="Pfam" id="PF01077">
    <property type="entry name" value="NIR_SIR"/>
    <property type="match status" value="1"/>
</dbReference>
<dbReference type="Pfam" id="PF03460">
    <property type="entry name" value="NIR_SIR_ferr"/>
    <property type="match status" value="2"/>
</dbReference>
<dbReference type="PRINTS" id="PR00397">
    <property type="entry name" value="SIROHAEM"/>
</dbReference>
<dbReference type="SUPFAM" id="SSF56014">
    <property type="entry name" value="Nitrite and sulphite reductase 4Fe-4S domain-like"/>
    <property type="match status" value="2"/>
</dbReference>
<dbReference type="SUPFAM" id="SSF55124">
    <property type="entry name" value="Nitrite/Sulfite reductase N-terminal domain-like"/>
    <property type="match status" value="2"/>
</dbReference>
<dbReference type="PROSITE" id="PS00365">
    <property type="entry name" value="NIR_SIR"/>
    <property type="match status" value="1"/>
</dbReference>
<gene>
    <name evidence="1" type="primary">cysI</name>
    <name type="ordered locus">VF_0311</name>
</gene>
<proteinExistence type="inferred from homology"/>
<protein>
    <recommendedName>
        <fullName evidence="1">Sulfite reductase [NADPH] hemoprotein beta-component</fullName>
        <shortName evidence="1">SiR-HP</shortName>
        <shortName evidence="1">SiRHP</shortName>
        <ecNumber evidence="1">1.8.1.2</ecNumber>
    </recommendedName>
</protein>
<keyword id="KW-0004">4Fe-4S</keyword>
<keyword id="KW-0028">Amino-acid biosynthesis</keyword>
<keyword id="KW-0198">Cysteine biosynthesis</keyword>
<keyword id="KW-0349">Heme</keyword>
<keyword id="KW-0408">Iron</keyword>
<keyword id="KW-0411">Iron-sulfur</keyword>
<keyword id="KW-0479">Metal-binding</keyword>
<keyword id="KW-0521">NADP</keyword>
<keyword id="KW-0560">Oxidoreductase</keyword>
<keyword id="KW-1185">Reference proteome</keyword>
<accession>Q5E840</accession>
<comment type="function">
    <text evidence="1">Component of the sulfite reductase complex that catalyzes the 6-electron reduction of sulfite to sulfide. This is one of several activities required for the biosynthesis of L-cysteine from sulfate.</text>
</comment>
<comment type="catalytic activity">
    <reaction evidence="1">
        <text>hydrogen sulfide + 3 NADP(+) + 3 H2O = sulfite + 3 NADPH + 4 H(+)</text>
        <dbReference type="Rhea" id="RHEA:13801"/>
        <dbReference type="ChEBI" id="CHEBI:15377"/>
        <dbReference type="ChEBI" id="CHEBI:15378"/>
        <dbReference type="ChEBI" id="CHEBI:17359"/>
        <dbReference type="ChEBI" id="CHEBI:29919"/>
        <dbReference type="ChEBI" id="CHEBI:57783"/>
        <dbReference type="ChEBI" id="CHEBI:58349"/>
        <dbReference type="EC" id="1.8.1.2"/>
    </reaction>
</comment>
<comment type="cofactor">
    <cofactor evidence="1">
        <name>siroheme</name>
        <dbReference type="ChEBI" id="CHEBI:60052"/>
    </cofactor>
    <text evidence="1">Binds 1 siroheme per subunit.</text>
</comment>
<comment type="cofactor">
    <cofactor evidence="1">
        <name>[4Fe-4S] cluster</name>
        <dbReference type="ChEBI" id="CHEBI:49883"/>
    </cofactor>
    <text evidence="1">Binds 1 [4Fe-4S] cluster per subunit.</text>
</comment>
<comment type="pathway">
    <text evidence="1">Sulfur metabolism; hydrogen sulfide biosynthesis; hydrogen sulfide from sulfite (NADPH route): step 1/1.</text>
</comment>
<comment type="subunit">
    <text evidence="1">Alpha(8)-beta(8). The alpha component is a flavoprotein, the beta component is a hemoprotein.</text>
</comment>
<comment type="similarity">
    <text evidence="1">Belongs to the nitrite and sulfite reductase 4Fe-4S domain family.</text>
</comment>
<reference key="1">
    <citation type="journal article" date="2005" name="Proc. Natl. Acad. Sci. U.S.A.">
        <title>Complete genome sequence of Vibrio fischeri: a symbiotic bacterium with pathogenic congeners.</title>
        <authorList>
            <person name="Ruby E.G."/>
            <person name="Urbanowski M."/>
            <person name="Campbell J."/>
            <person name="Dunn A."/>
            <person name="Faini M."/>
            <person name="Gunsalus R."/>
            <person name="Lostroh P."/>
            <person name="Lupp C."/>
            <person name="McCann J."/>
            <person name="Millikan D."/>
            <person name="Schaefer A."/>
            <person name="Stabb E."/>
            <person name="Stevens A."/>
            <person name="Visick K."/>
            <person name="Whistler C."/>
            <person name="Greenberg E.P."/>
        </authorList>
    </citation>
    <scope>NUCLEOTIDE SEQUENCE [LARGE SCALE GENOMIC DNA]</scope>
    <source>
        <strain>ATCC 700601 / ES114</strain>
    </source>
</reference>
<sequence length="576" mass="64631">MSELIDVKTILSGTELGPLADNERLKRESKYLRGTIVEDLQDRITGGFTKDNFQLIRFHGMYQQDDRDIRAERAKQKLEPLHNVMLRARMPGGIITPKQWLAIDKFAEEHTSYGSLRLTTRQTFQFHGVLKPNIKLMHQTLNSIGIDSIATAGDVNRNVLCTTNPVESELHQEAYEWAKKISEHLLPKTRAYAEIWLDGEKLETTDEEPILGSNYLPRKFKTTVVIPPQNDVDVHANDLNFIAIADNGKLVGFNVLVGGGLAMTHGDTATYPRKADDFGFVPLDKTLDVAAAVVTTQRDWGNRSNRKNAKTKYTLDRVGSDVFKGEVEKRAGVQFEKSRPYELTERGDRIGWVEGIDGKHHLALFIENGRLLDYPGKPLKTGVAEIAKVHQGDFRMTANQNLIVAGVPSEQKDHIEQIARAHGLIDDTHSEQRKNSMACVAFPTCPLAMAEAERFLPEFVTEIEGVLKKHNLPEEDNIIFRVTGCPNGCGRAMLAEIGLVGKAPGRYNFHLGGNRSGTRVPKMYKENITDRQILTEIDQLVGRWATERNENEGFGDFTIRAGIVDEVKVSKRDFHA</sequence>
<organism>
    <name type="scientific">Aliivibrio fischeri (strain ATCC 700601 / ES114)</name>
    <name type="common">Vibrio fischeri</name>
    <dbReference type="NCBI Taxonomy" id="312309"/>
    <lineage>
        <taxon>Bacteria</taxon>
        <taxon>Pseudomonadati</taxon>
        <taxon>Pseudomonadota</taxon>
        <taxon>Gammaproteobacteria</taxon>
        <taxon>Vibrionales</taxon>
        <taxon>Vibrionaceae</taxon>
        <taxon>Aliivibrio</taxon>
    </lineage>
</organism>
<name>CYSI_ALIF1</name>
<evidence type="ECO:0000255" key="1">
    <source>
        <dbReference type="HAMAP-Rule" id="MF_01540"/>
    </source>
</evidence>
<feature type="chain" id="PRO_0000199913" description="Sulfite reductase [NADPH] hemoprotein beta-component">
    <location>
        <begin position="1"/>
        <end position="576"/>
    </location>
</feature>
<feature type="binding site" evidence="1">
    <location>
        <position position="439"/>
    </location>
    <ligand>
        <name>[4Fe-4S] cluster</name>
        <dbReference type="ChEBI" id="CHEBI:49883"/>
    </ligand>
</feature>
<feature type="binding site" evidence="1">
    <location>
        <position position="445"/>
    </location>
    <ligand>
        <name>[4Fe-4S] cluster</name>
        <dbReference type="ChEBI" id="CHEBI:49883"/>
    </ligand>
</feature>
<feature type="binding site" evidence="1">
    <location>
        <position position="485"/>
    </location>
    <ligand>
        <name>[4Fe-4S] cluster</name>
        <dbReference type="ChEBI" id="CHEBI:49883"/>
    </ligand>
</feature>
<feature type="binding site" evidence="1">
    <location>
        <position position="489"/>
    </location>
    <ligand>
        <name>[4Fe-4S] cluster</name>
        <dbReference type="ChEBI" id="CHEBI:49883"/>
    </ligand>
</feature>
<feature type="binding site" description="axial binding residue" evidence="1">
    <location>
        <position position="489"/>
    </location>
    <ligand>
        <name>siroheme</name>
        <dbReference type="ChEBI" id="CHEBI:60052"/>
    </ligand>
    <ligandPart>
        <name>Fe</name>
        <dbReference type="ChEBI" id="CHEBI:18248"/>
    </ligandPart>
</feature>